<proteinExistence type="inferred from homology"/>
<reference key="1">
    <citation type="journal article" date="2002" name="Biochim. Biophys. Acta">
        <title>Molecular cloning and characterization of hetR genes from filamentous cyanobacteria.</title>
        <authorList>
            <person name="Schiefer W."/>
            <person name="Schuetz K."/>
            <person name="Hachtel W."/>
            <person name="Happe T."/>
        </authorList>
    </citation>
    <scope>NUCLEOTIDE SEQUENCE [GENOMIC DNA]</scope>
    <source>
        <strain>IMS101</strain>
    </source>
</reference>
<reference key="2">
    <citation type="journal article" date="2015" name="Proc. Natl. Acad. Sci. U.S.A.">
        <title>Trichodesmium genome maintains abundant, widespread noncoding DNA in situ, despite oligotrophic lifestyle.</title>
        <authorList>
            <person name="Walworth N."/>
            <person name="Pfreundt U."/>
            <person name="Nelson W.C."/>
            <person name="Mincer T."/>
            <person name="Heidelberg J.F."/>
            <person name="Fu F."/>
            <person name="Waterbury J.B."/>
            <person name="Glavina del Rio T."/>
            <person name="Goodwin L."/>
            <person name="Kyrpides N.C."/>
            <person name="Land M.L."/>
            <person name="Woyke T."/>
            <person name="Hutchins D.A."/>
            <person name="Hess W.R."/>
            <person name="Webb E.A."/>
        </authorList>
    </citation>
    <scope>NUCLEOTIDE SEQUENCE [LARGE SCALE GENOMIC DNA]</scope>
    <source>
        <strain>IMS101</strain>
    </source>
</reference>
<reference key="3">
    <citation type="journal article" date="2001" name="Science">
        <title>Segregation of nitrogen fixation and oxygenic photosynthesis in the marine cyanobacterium Trichodesmium.</title>
        <authorList>
            <person name="Berman-Frank I."/>
            <person name="Lundgren P."/>
            <person name="Chen Y.B."/>
            <person name="Kuepper H."/>
            <person name="Kolber Z."/>
            <person name="Bergman B."/>
            <person name="Falkowski P."/>
        </authorList>
    </citation>
    <scope>DOES NOT FORM HETEROCYSTS</scope>
</reference>
<feature type="chain" id="PRO_0000208483" description="DNA-binding transcriptional activator HetR">
    <location>
        <begin position="1"/>
        <end position="302"/>
    </location>
</feature>
<feature type="active site" evidence="1">
    <location>
        <position position="153"/>
    </location>
</feature>
<feature type="disulfide bond" description="Interchain" evidence="1">
    <location>
        <position position="49"/>
    </location>
</feature>
<feature type="sequence conflict" description="In Ref. 1; AAL05045." evidence="3" ref="1">
    <original>G</original>
    <variation>R</variation>
    <location>
        <position position="37"/>
    </location>
</feature>
<gene>
    <name evidence="1" type="primary">hetR</name>
    <name type="ordered locus">Tery_1921</name>
</gene>
<protein>
    <recommendedName>
        <fullName evidence="1">DNA-binding transcriptional activator HetR</fullName>
        <ecNumber evidence="1">3.4.21.-</ecNumber>
    </recommendedName>
</protein>
<keyword id="KW-0010">Activator</keyword>
<keyword id="KW-1015">Disulfide bond</keyword>
<keyword id="KW-0238">DNA-binding</keyword>
<keyword id="KW-0378">Hydrolase</keyword>
<keyword id="KW-0645">Protease</keyword>
<keyword id="KW-0720">Serine protease</keyword>
<keyword id="KW-0804">Transcription</keyword>
<keyword id="KW-0805">Transcription regulation</keyword>
<comment type="function">
    <text evidence="1">Might be involved in temporal and/or spatial regulation of nitrogen fixation. Dimerization is required for DNA-binding. Has both a protease and a DNA-binding activity.</text>
</comment>
<comment type="subunit">
    <text evidence="1">Homodimer; disulfide-linked.</text>
</comment>
<comment type="miscellaneous">
    <text evidence="2">This filamentous cyanobacterium does not make heterocysts, instead a combined temporal and spatial segregation of nitrogen fixation and oxygenic photosynthesis permits the cells to fix nitrogen for only a few hours during the photoperiod.</text>
</comment>
<comment type="similarity">
    <text evidence="1">Belongs to the peptidase S48 family.</text>
</comment>
<comment type="sequence caution" evidence="3">
    <conflict type="erroneous initiation">
        <sequence resource="EMBL-CDS" id="ABG51176"/>
    </conflict>
    <text>Truncated N-terminus.</text>
</comment>
<organism>
    <name type="scientific">Trichodesmium erythraeum (strain IMS101)</name>
    <dbReference type="NCBI Taxonomy" id="203124"/>
    <lineage>
        <taxon>Bacteria</taxon>
        <taxon>Bacillati</taxon>
        <taxon>Cyanobacteriota</taxon>
        <taxon>Cyanophyceae</taxon>
        <taxon>Oscillatoriophycideae</taxon>
        <taxon>Oscillatoriales</taxon>
        <taxon>Microcoleaceae</taxon>
        <taxon>Trichodesmium</taxon>
    </lineage>
</organism>
<name>HETR_TRIEI</name>
<accession>Q93CE9</accession>
<accession>Q113Z8</accession>
<dbReference type="EC" id="3.4.21.-" evidence="1"/>
<dbReference type="EMBL" id="AF410432">
    <property type="protein sequence ID" value="AAL05045.1"/>
    <property type="molecule type" value="Genomic_DNA"/>
</dbReference>
<dbReference type="EMBL" id="CP000393">
    <property type="protein sequence ID" value="ABG51176.1"/>
    <property type="status" value="ALT_INIT"/>
    <property type="molecule type" value="Genomic_DNA"/>
</dbReference>
<dbReference type="RefSeq" id="WP_011611549.1">
    <property type="nucleotide sequence ID" value="NC_008312.1"/>
</dbReference>
<dbReference type="SMR" id="Q93CE9"/>
<dbReference type="STRING" id="203124.Tery_1921"/>
<dbReference type="MEROPS" id="S48.001"/>
<dbReference type="KEGG" id="ter:Tery_1921"/>
<dbReference type="eggNOG" id="ENOG502Z96Q">
    <property type="taxonomic scope" value="Bacteria"/>
</dbReference>
<dbReference type="HOGENOM" id="CLU_926376_0_0_3"/>
<dbReference type="GO" id="GO:0003677">
    <property type="term" value="F:DNA binding"/>
    <property type="evidence" value="ECO:0007669"/>
    <property type="project" value="UniProtKB-UniRule"/>
</dbReference>
<dbReference type="GO" id="GO:0004252">
    <property type="term" value="F:serine-type endopeptidase activity"/>
    <property type="evidence" value="ECO:0007669"/>
    <property type="project" value="UniProtKB-UniRule"/>
</dbReference>
<dbReference type="GO" id="GO:0043158">
    <property type="term" value="P:heterocyst development"/>
    <property type="evidence" value="ECO:0007669"/>
    <property type="project" value="InterPro"/>
</dbReference>
<dbReference type="GO" id="GO:0006508">
    <property type="term" value="P:proteolysis"/>
    <property type="evidence" value="ECO:0007669"/>
    <property type="project" value="UniProtKB-KW"/>
</dbReference>
<dbReference type="Gene3D" id="6.10.250.2740">
    <property type="match status" value="1"/>
</dbReference>
<dbReference type="Gene3D" id="1.10.10.1670">
    <property type="entry name" value="HetR, flap domain"/>
    <property type="match status" value="1"/>
</dbReference>
<dbReference type="Gene3D" id="1.10.10.1680">
    <property type="entry name" value="HetR, N-terminal DNA-binding domain"/>
    <property type="match status" value="1"/>
</dbReference>
<dbReference type="HAMAP" id="MF_00781">
    <property type="entry name" value="HetR"/>
    <property type="match status" value="1"/>
</dbReference>
<dbReference type="InterPro" id="IPR040949">
    <property type="entry name" value="HetR_C"/>
</dbReference>
<dbReference type="InterPro" id="IPR041936">
    <property type="entry name" value="HetR_DNA-bd_N"/>
</dbReference>
<dbReference type="InterPro" id="IPR041935">
    <property type="entry name" value="HetR_flap"/>
</dbReference>
<dbReference type="InterPro" id="IPR005319">
    <property type="entry name" value="Pept_S48_HetR"/>
</dbReference>
<dbReference type="NCBIfam" id="NF009718">
    <property type="entry name" value="PRK13245.1"/>
    <property type="match status" value="1"/>
</dbReference>
<dbReference type="Pfam" id="PF18460">
    <property type="entry name" value="HetR_C"/>
    <property type="match status" value="1"/>
</dbReference>
<dbReference type="Pfam" id="PF03574">
    <property type="entry name" value="Peptidase_S48"/>
    <property type="match status" value="1"/>
</dbReference>
<evidence type="ECO:0000255" key="1">
    <source>
        <dbReference type="HAMAP-Rule" id="MF_00781"/>
    </source>
</evidence>
<evidence type="ECO:0000269" key="2">
    <source>
    </source>
</evidence>
<evidence type="ECO:0000305" key="3"/>
<sequence>MMKTDTDLINSLSPSAMDQIMLYLAFSAMRTSGHRHGAFLDAAATAAKCAIYMTYIEQGQNLRMTGHLHHIEPKRVKVIVQEVEEALTKGKLLKMLGSQEPRYLIQFPYVWLEQYPWTPSRSRLPGNNLTTEEKRYIEGKLPSNMPDARLINSFQFMELIEFLHRRSQEDFPPERRMPLSEALAEHIKRRLIYSGTVTKIDSPWGMPFYALTRSSYSPEGQEERTYIMVEDTARYFRLMKDWAENNNTNKVMRILEEFDISPDRFEQAKEDLDEIIRHWADRYHESGGKQMVVQMVFGLKDD</sequence>